<feature type="chain" id="PRO_0000307021" description="Aspartate 1-decarboxylase beta chain" evidence="1">
    <location>
        <begin position="1"/>
        <end position="24"/>
    </location>
</feature>
<feature type="chain" id="PRO_0000307022" description="Aspartate 1-decarboxylase alpha chain" evidence="1">
    <location>
        <begin position="25"/>
        <end position="136"/>
    </location>
</feature>
<feature type="active site" description="Schiff-base intermediate with substrate; via pyruvic acid" evidence="1">
    <location>
        <position position="25"/>
    </location>
</feature>
<feature type="active site" description="Proton donor" evidence="1">
    <location>
        <position position="58"/>
    </location>
</feature>
<feature type="binding site" evidence="1">
    <location>
        <position position="57"/>
    </location>
    <ligand>
        <name>substrate</name>
    </ligand>
</feature>
<feature type="binding site" evidence="1">
    <location>
        <begin position="73"/>
        <end position="75"/>
    </location>
    <ligand>
        <name>substrate</name>
    </ligand>
</feature>
<feature type="modified residue" description="Pyruvic acid (Ser)" evidence="1">
    <location>
        <position position="25"/>
    </location>
</feature>
<proteinExistence type="inferred from homology"/>
<keyword id="KW-0068">Autocatalytic cleavage</keyword>
<keyword id="KW-0963">Cytoplasm</keyword>
<keyword id="KW-0210">Decarboxylase</keyword>
<keyword id="KW-0456">Lyase</keyword>
<keyword id="KW-0566">Pantothenate biosynthesis</keyword>
<keyword id="KW-0670">Pyruvate</keyword>
<keyword id="KW-1185">Reference proteome</keyword>
<keyword id="KW-0704">Schiff base</keyword>
<keyword id="KW-0865">Zymogen</keyword>
<dbReference type="EC" id="4.1.1.11" evidence="1"/>
<dbReference type="EMBL" id="CP000480">
    <property type="protein sequence ID" value="ABK75859.1"/>
    <property type="molecule type" value="Genomic_DNA"/>
</dbReference>
<dbReference type="EMBL" id="CP001663">
    <property type="protein sequence ID" value="AFP36506.1"/>
    <property type="molecule type" value="Genomic_DNA"/>
</dbReference>
<dbReference type="RefSeq" id="WP_011726613.1">
    <property type="nucleotide sequence ID" value="NZ_SIJM01000001.1"/>
</dbReference>
<dbReference type="RefSeq" id="YP_884441.1">
    <property type="nucleotide sequence ID" value="NC_008596.1"/>
</dbReference>
<dbReference type="SMR" id="A0QNF3"/>
<dbReference type="STRING" id="246196.MSMEG_0021"/>
<dbReference type="PaxDb" id="246196-MSMEI_0023"/>
<dbReference type="GeneID" id="93454947"/>
<dbReference type="KEGG" id="msb:LJ00_00105"/>
<dbReference type="KEGG" id="msg:MSMEI_0023"/>
<dbReference type="KEGG" id="msm:MSMEG_0021"/>
<dbReference type="PATRIC" id="fig|246196.19.peg.19"/>
<dbReference type="eggNOG" id="COG0853">
    <property type="taxonomic scope" value="Bacteria"/>
</dbReference>
<dbReference type="OrthoDB" id="9803983at2"/>
<dbReference type="UniPathway" id="UPA00028">
    <property type="reaction ID" value="UER00002"/>
</dbReference>
<dbReference type="Proteomes" id="UP000000757">
    <property type="component" value="Chromosome"/>
</dbReference>
<dbReference type="Proteomes" id="UP000006158">
    <property type="component" value="Chromosome"/>
</dbReference>
<dbReference type="GO" id="GO:0005829">
    <property type="term" value="C:cytosol"/>
    <property type="evidence" value="ECO:0007669"/>
    <property type="project" value="TreeGrafter"/>
</dbReference>
<dbReference type="GO" id="GO:0004068">
    <property type="term" value="F:aspartate 1-decarboxylase activity"/>
    <property type="evidence" value="ECO:0007669"/>
    <property type="project" value="UniProtKB-UniRule"/>
</dbReference>
<dbReference type="GO" id="GO:0006523">
    <property type="term" value="P:alanine biosynthetic process"/>
    <property type="evidence" value="ECO:0007669"/>
    <property type="project" value="InterPro"/>
</dbReference>
<dbReference type="GO" id="GO:0015940">
    <property type="term" value="P:pantothenate biosynthetic process"/>
    <property type="evidence" value="ECO:0007669"/>
    <property type="project" value="UniProtKB-UniRule"/>
</dbReference>
<dbReference type="CDD" id="cd06919">
    <property type="entry name" value="Asp_decarbox"/>
    <property type="match status" value="1"/>
</dbReference>
<dbReference type="Gene3D" id="2.40.40.20">
    <property type="match status" value="1"/>
</dbReference>
<dbReference type="HAMAP" id="MF_00446">
    <property type="entry name" value="PanD"/>
    <property type="match status" value="1"/>
</dbReference>
<dbReference type="InterPro" id="IPR009010">
    <property type="entry name" value="Asp_de-COase-like_dom_sf"/>
</dbReference>
<dbReference type="InterPro" id="IPR003190">
    <property type="entry name" value="Asp_decarbox"/>
</dbReference>
<dbReference type="NCBIfam" id="TIGR00223">
    <property type="entry name" value="panD"/>
    <property type="match status" value="1"/>
</dbReference>
<dbReference type="PANTHER" id="PTHR21012">
    <property type="entry name" value="ASPARTATE 1-DECARBOXYLASE"/>
    <property type="match status" value="1"/>
</dbReference>
<dbReference type="PANTHER" id="PTHR21012:SF0">
    <property type="entry name" value="ASPARTATE 1-DECARBOXYLASE"/>
    <property type="match status" value="1"/>
</dbReference>
<dbReference type="Pfam" id="PF02261">
    <property type="entry name" value="Asp_decarbox"/>
    <property type="match status" value="1"/>
</dbReference>
<dbReference type="PIRSF" id="PIRSF006246">
    <property type="entry name" value="Asp_decarbox"/>
    <property type="match status" value="1"/>
</dbReference>
<dbReference type="SUPFAM" id="SSF50692">
    <property type="entry name" value="ADC-like"/>
    <property type="match status" value="1"/>
</dbReference>
<evidence type="ECO:0000255" key="1">
    <source>
        <dbReference type="HAMAP-Rule" id="MF_00446"/>
    </source>
</evidence>
<protein>
    <recommendedName>
        <fullName evidence="1">Aspartate 1-decarboxylase</fullName>
        <ecNumber evidence="1">4.1.1.11</ecNumber>
    </recommendedName>
    <alternativeName>
        <fullName evidence="1">Aspartate alpha-decarboxylase</fullName>
    </alternativeName>
    <component>
        <recommendedName>
            <fullName evidence="1">Aspartate 1-decarboxylase beta chain</fullName>
        </recommendedName>
    </component>
    <component>
        <recommendedName>
            <fullName evidence="1">Aspartate 1-decarboxylase alpha chain</fullName>
        </recommendedName>
    </component>
</protein>
<name>PAND_MYCS2</name>
<gene>
    <name evidence="1" type="primary">panD</name>
    <name type="ordered locus">MSMEG_0021</name>
    <name type="ordered locus">MSMEI_0023</name>
</gene>
<reference key="1">
    <citation type="submission" date="2006-10" db="EMBL/GenBank/DDBJ databases">
        <authorList>
            <person name="Fleischmann R.D."/>
            <person name="Dodson R.J."/>
            <person name="Haft D.H."/>
            <person name="Merkel J.S."/>
            <person name="Nelson W.C."/>
            <person name="Fraser C.M."/>
        </authorList>
    </citation>
    <scope>NUCLEOTIDE SEQUENCE [LARGE SCALE GENOMIC DNA]</scope>
    <source>
        <strain>ATCC 700084 / mc(2)155</strain>
    </source>
</reference>
<reference key="2">
    <citation type="journal article" date="2007" name="Genome Biol.">
        <title>Interrupted coding sequences in Mycobacterium smegmatis: authentic mutations or sequencing errors?</title>
        <authorList>
            <person name="Deshayes C."/>
            <person name="Perrodou E."/>
            <person name="Gallien S."/>
            <person name="Euphrasie D."/>
            <person name="Schaeffer C."/>
            <person name="Van-Dorsselaer A."/>
            <person name="Poch O."/>
            <person name="Lecompte O."/>
            <person name="Reyrat J.-M."/>
        </authorList>
    </citation>
    <scope>NUCLEOTIDE SEQUENCE [LARGE SCALE GENOMIC DNA]</scope>
    <source>
        <strain>ATCC 700084 / mc(2)155</strain>
    </source>
</reference>
<reference key="3">
    <citation type="journal article" date="2009" name="Genome Res.">
        <title>Ortho-proteogenomics: multiple proteomes investigation through orthology and a new MS-based protocol.</title>
        <authorList>
            <person name="Gallien S."/>
            <person name="Perrodou E."/>
            <person name="Carapito C."/>
            <person name="Deshayes C."/>
            <person name="Reyrat J.-M."/>
            <person name="Van Dorsselaer A."/>
            <person name="Poch O."/>
            <person name="Schaeffer C."/>
            <person name="Lecompte O."/>
        </authorList>
    </citation>
    <scope>NUCLEOTIDE SEQUENCE [LARGE SCALE GENOMIC DNA]</scope>
    <source>
        <strain>ATCC 700084 / mc(2)155</strain>
    </source>
</reference>
<organism>
    <name type="scientific">Mycolicibacterium smegmatis (strain ATCC 700084 / mc(2)155)</name>
    <name type="common">Mycobacterium smegmatis</name>
    <dbReference type="NCBI Taxonomy" id="246196"/>
    <lineage>
        <taxon>Bacteria</taxon>
        <taxon>Bacillati</taxon>
        <taxon>Actinomycetota</taxon>
        <taxon>Actinomycetes</taxon>
        <taxon>Mycobacteriales</taxon>
        <taxon>Mycobacteriaceae</taxon>
        <taxon>Mycolicibacterium</taxon>
    </lineage>
</organism>
<accession>A0QNF3</accession>
<accession>I7G133</accession>
<comment type="function">
    <text evidence="1">Catalyzes the pyruvoyl-dependent decarboxylation of aspartate to produce beta-alanine.</text>
</comment>
<comment type="catalytic activity">
    <reaction evidence="1">
        <text>L-aspartate + H(+) = beta-alanine + CO2</text>
        <dbReference type="Rhea" id="RHEA:19497"/>
        <dbReference type="ChEBI" id="CHEBI:15378"/>
        <dbReference type="ChEBI" id="CHEBI:16526"/>
        <dbReference type="ChEBI" id="CHEBI:29991"/>
        <dbReference type="ChEBI" id="CHEBI:57966"/>
        <dbReference type="EC" id="4.1.1.11"/>
    </reaction>
</comment>
<comment type="cofactor">
    <cofactor evidence="1">
        <name>pyruvate</name>
        <dbReference type="ChEBI" id="CHEBI:15361"/>
    </cofactor>
    <text evidence="1">Binds 1 pyruvoyl group covalently per subunit.</text>
</comment>
<comment type="pathway">
    <text evidence="1">Cofactor biosynthesis; (R)-pantothenate biosynthesis; beta-alanine from L-aspartate: step 1/1.</text>
</comment>
<comment type="subunit">
    <text evidence="1">Heterooctamer of four alpha and four beta subunits.</text>
</comment>
<comment type="subcellular location">
    <subcellularLocation>
        <location evidence="1">Cytoplasm</location>
    </subcellularLocation>
</comment>
<comment type="PTM">
    <text evidence="1">Is synthesized initially as an inactive proenzyme, which is activated by self-cleavage at a specific serine bond to produce a beta-subunit with a hydroxyl group at its C-terminus and an alpha-subunit with a pyruvoyl group at its N-terminus.</text>
</comment>
<comment type="similarity">
    <text evidence="1">Belongs to the PanD family.</text>
</comment>
<sequence length="136" mass="14154">MQRVLLASKIHRATVTQADLHYVGSITIDAELMAAADIVEGEQVHVVDITSGARLVTYAITGTPGSGVIGINGAAAHLISPGNLVIIMSFVHLDEAERADHRANVVHVDADNHIVTIGSDPAQPVPGAADQLVGRV</sequence>